<feature type="chain" id="PRO_0000394156" description="Probable bifunctional methylthioribulose-1-phosphate dehydratase/enolase-phosphatase E1">
    <location>
        <begin position="1"/>
        <end position="517"/>
    </location>
</feature>
<feature type="region of interest" description="Methylthioribulose-1-phosphate dehydratase" evidence="1">
    <location>
        <begin position="1"/>
        <end position="242"/>
    </location>
</feature>
<feature type="region of interest" description="Enolase-phosphatase E1" evidence="1">
    <location>
        <begin position="278"/>
        <end position="517"/>
    </location>
</feature>
<feature type="active site" description="Proton donor/acceptor; for methylthioribulose-1-phosphate dehydratase activity" evidence="1">
    <location>
        <position position="157"/>
    </location>
</feature>
<feature type="binding site" evidence="1">
    <location>
        <position position="114"/>
    </location>
    <ligand>
        <name>substrate</name>
        <label>1</label>
        <note>for methylthioribulose-1-phosphate dehydratase activity</note>
    </ligand>
</feature>
<feature type="binding site" evidence="1">
    <location>
        <position position="132"/>
    </location>
    <ligand>
        <name>Zn(2+)</name>
        <dbReference type="ChEBI" id="CHEBI:29105"/>
    </ligand>
</feature>
<feature type="binding site" evidence="1">
    <location>
        <position position="134"/>
    </location>
    <ligand>
        <name>Zn(2+)</name>
        <dbReference type="ChEBI" id="CHEBI:29105"/>
    </ligand>
</feature>
<feature type="binding site" evidence="1">
    <location>
        <position position="207"/>
    </location>
    <ligand>
        <name>Zn(2+)</name>
        <dbReference type="ChEBI" id="CHEBI:29105"/>
    </ligand>
</feature>
<feature type="binding site" evidence="1">
    <location>
        <position position="281"/>
    </location>
    <ligand>
        <name>Mg(2+)</name>
        <dbReference type="ChEBI" id="CHEBI:18420"/>
    </ligand>
</feature>
<feature type="binding site" evidence="1">
    <location>
        <position position="283"/>
    </location>
    <ligand>
        <name>Mg(2+)</name>
        <dbReference type="ChEBI" id="CHEBI:18420"/>
    </ligand>
</feature>
<feature type="binding site" evidence="1">
    <location>
        <begin position="416"/>
        <end position="417"/>
    </location>
    <ligand>
        <name>substrate</name>
        <label>2</label>
        <note>for enolase-phosphatase activity</note>
    </ligand>
</feature>
<feature type="binding site" evidence="1">
    <location>
        <position position="450"/>
    </location>
    <ligand>
        <name>substrate</name>
        <label>2</label>
        <note>for enolase-phosphatase activity</note>
    </ligand>
</feature>
<feature type="binding site" evidence="1">
    <location>
        <position position="476"/>
    </location>
    <ligand>
        <name>Mg(2+)</name>
        <dbReference type="ChEBI" id="CHEBI:18420"/>
    </ligand>
</feature>
<feature type="sequence conflict" description="In Ref. 2; ACG32666." evidence="2" ref="2">
    <original>T</original>
    <variation>A</variation>
    <location>
        <position position="61"/>
    </location>
</feature>
<feature type="sequence conflict" description="In Ref. 2; ACG32666." evidence="2" ref="2">
    <original>Q</original>
    <variation>R</variation>
    <location>
        <position position="333"/>
    </location>
</feature>
<comment type="catalytic activity">
    <reaction evidence="1">
        <text>5-(methylsulfanyl)-D-ribulose 1-phosphate = 5-methylsulfanyl-2,3-dioxopentyl phosphate + H2O</text>
        <dbReference type="Rhea" id="RHEA:15549"/>
        <dbReference type="ChEBI" id="CHEBI:15377"/>
        <dbReference type="ChEBI" id="CHEBI:58548"/>
        <dbReference type="ChEBI" id="CHEBI:58828"/>
        <dbReference type="EC" id="4.2.1.109"/>
    </reaction>
</comment>
<comment type="catalytic activity">
    <reaction evidence="1">
        <text>5-methylsulfanyl-2,3-dioxopentyl phosphate + H2O = 1,2-dihydroxy-5-(methylsulfanyl)pent-1-en-3-one + phosphate</text>
        <dbReference type="Rhea" id="RHEA:21700"/>
        <dbReference type="ChEBI" id="CHEBI:15377"/>
        <dbReference type="ChEBI" id="CHEBI:43474"/>
        <dbReference type="ChEBI" id="CHEBI:49252"/>
        <dbReference type="ChEBI" id="CHEBI:58828"/>
        <dbReference type="EC" id="3.1.3.77"/>
    </reaction>
</comment>
<comment type="cofactor">
    <cofactor evidence="1">
        <name>Zn(2+)</name>
        <dbReference type="ChEBI" id="CHEBI:29105"/>
    </cofactor>
    <text evidence="1">Binds 1 zinc ion per subunit.</text>
</comment>
<comment type="cofactor">
    <cofactor evidence="1">
        <name>Mg(2+)</name>
        <dbReference type="ChEBI" id="CHEBI:18420"/>
    </cofactor>
    <text evidence="1">Binds 1 Mg(2+) ion per subunit.</text>
</comment>
<comment type="pathway">
    <text evidence="1">Amino-acid biosynthesis; L-methionine biosynthesis via salvage pathway; L-methionine from S-methyl-5-thio-alpha-D-ribose 1-phosphate: step 2/6.</text>
</comment>
<comment type="pathway">
    <text evidence="1">Amino-acid biosynthesis; L-methionine biosynthesis via salvage pathway; L-methionine from S-methyl-5-thio-alpha-D-ribose 1-phosphate: step 3/6.</text>
</comment>
<comment type="pathway">
    <text evidence="1">Amino-acid biosynthesis; L-methionine biosynthesis via salvage pathway; L-methionine from S-methyl-5-thio-alpha-D-ribose 1-phosphate: step 4/6.</text>
</comment>
<comment type="similarity">
    <text evidence="1">In the N-terminal section; belongs to the aldolase class II family. MtnB subfamily.</text>
</comment>
<comment type="similarity">
    <text evidence="1">In the C-terminal section; belongs to the HAD-like hydrolase superfamily. MasA/MtnC family.</text>
</comment>
<sequence length="517" mass="56970">MACSGCSCEAAVGAMASEAYLEGAPVREARELVAELCRHFYAQGWVTGTGGSITVKVNDPTVPLADRLIVMSPSGVQKERMVAEDMYVMAADGKVLSAPVAKPWPNKPPKCTDCAPLFMKAYLMRGAGAVIHSHGIETCIATMLIPGAKEFRVTHMEMIKGIKGHGYHDELVIPIIENTPYEYELTDSLSEAIAAYPKATAVLVRNHGIYVWGESWINAKTQAECYHYLLDACIKLYQLGIDWTTPEHGSINNPRRPHSILSPEICNGCHAADSSKCVVLDIEGTTTPISFVTDVMFPYARDNVRKHLTSTFDFEETKEDIKLLRIQIEDDLQNGVAGAVPVPPDEGGKEEVINSLVANVESMIKADRKITSLKQLQGHIWRIGFQKKELQGVVFEDVPVALKNWHASGIKVYIYSSGSREAQRLLFGNTTYGDLRKFLCGYFDTTTGNKRETRSYFEISQSLGVDSPSQILFITDVFQEAIAAKNAGFEVIISIRPGNAPLPDNHGFRTIKSFSEI</sequence>
<name>MTBC_MAIZE</name>
<organism>
    <name type="scientific">Zea mays</name>
    <name type="common">Maize</name>
    <dbReference type="NCBI Taxonomy" id="4577"/>
    <lineage>
        <taxon>Eukaryota</taxon>
        <taxon>Viridiplantae</taxon>
        <taxon>Streptophyta</taxon>
        <taxon>Embryophyta</taxon>
        <taxon>Tracheophyta</taxon>
        <taxon>Spermatophyta</taxon>
        <taxon>Magnoliopsida</taxon>
        <taxon>Liliopsida</taxon>
        <taxon>Poales</taxon>
        <taxon>Poaceae</taxon>
        <taxon>PACMAD clade</taxon>
        <taxon>Panicoideae</taxon>
        <taxon>Andropogonodae</taxon>
        <taxon>Andropogoneae</taxon>
        <taxon>Tripsacinae</taxon>
        <taxon>Zea</taxon>
    </lineage>
</organism>
<dbReference type="EC" id="4.2.1.109" evidence="1"/>
<dbReference type="EC" id="3.1.3.77" evidence="1"/>
<dbReference type="EMBL" id="BT042841">
    <property type="protein sequence ID" value="ACF87846.1"/>
    <property type="molecule type" value="mRNA"/>
</dbReference>
<dbReference type="EMBL" id="EU960548">
    <property type="protein sequence ID" value="ACG32666.1"/>
    <property type="molecule type" value="mRNA"/>
</dbReference>
<dbReference type="RefSeq" id="NP_001148725.2">
    <property type="nucleotide sequence ID" value="NM_001155253.2"/>
</dbReference>
<dbReference type="SMR" id="B4G0F3"/>
<dbReference type="FunCoup" id="B4G0F3">
    <property type="interactions" value="1599"/>
</dbReference>
<dbReference type="STRING" id="4577.B4G0F3"/>
<dbReference type="PaxDb" id="4577-GRMZM2G574782_P01"/>
<dbReference type="EnsemblPlants" id="Zm00001eb169620_T001">
    <property type="protein sequence ID" value="Zm00001eb169620_P001"/>
    <property type="gene ID" value="Zm00001eb169620"/>
</dbReference>
<dbReference type="GeneID" id="100282341"/>
<dbReference type="Gramene" id="Zm00001eb169620_T001">
    <property type="protein sequence ID" value="Zm00001eb169620_P001"/>
    <property type="gene ID" value="Zm00001eb169620"/>
</dbReference>
<dbReference type="KEGG" id="zma:100282341"/>
<dbReference type="eggNOG" id="KOG2630">
    <property type="taxonomic scope" value="Eukaryota"/>
</dbReference>
<dbReference type="eggNOG" id="KOG2631">
    <property type="taxonomic scope" value="Eukaryota"/>
</dbReference>
<dbReference type="HOGENOM" id="CLU_023273_3_1_1"/>
<dbReference type="InParanoid" id="B4G0F3"/>
<dbReference type="OrthoDB" id="191080at2759"/>
<dbReference type="UniPathway" id="UPA00904">
    <property type="reaction ID" value="UER00875"/>
</dbReference>
<dbReference type="UniPathway" id="UPA00904">
    <property type="reaction ID" value="UER00876"/>
</dbReference>
<dbReference type="UniPathway" id="UPA00904">
    <property type="reaction ID" value="UER00877"/>
</dbReference>
<dbReference type="Proteomes" id="UP000007305">
    <property type="component" value="Chromosome 4"/>
</dbReference>
<dbReference type="ExpressionAtlas" id="B4G0F3">
    <property type="expression patterns" value="baseline and differential"/>
</dbReference>
<dbReference type="GO" id="GO:0005737">
    <property type="term" value="C:cytoplasm"/>
    <property type="evidence" value="ECO:0000318"/>
    <property type="project" value="GO_Central"/>
</dbReference>
<dbReference type="GO" id="GO:0043874">
    <property type="term" value="F:acireductone synthase activity"/>
    <property type="evidence" value="ECO:0007669"/>
    <property type="project" value="UniProtKB-EC"/>
</dbReference>
<dbReference type="GO" id="GO:0000287">
    <property type="term" value="F:magnesium ion binding"/>
    <property type="evidence" value="ECO:0007669"/>
    <property type="project" value="UniProtKB-UniRule"/>
</dbReference>
<dbReference type="GO" id="GO:0046570">
    <property type="term" value="F:methylthioribulose 1-phosphate dehydratase activity"/>
    <property type="evidence" value="ECO:0000318"/>
    <property type="project" value="GO_Central"/>
</dbReference>
<dbReference type="GO" id="GO:0008270">
    <property type="term" value="F:zinc ion binding"/>
    <property type="evidence" value="ECO:0007669"/>
    <property type="project" value="UniProtKB-UniRule"/>
</dbReference>
<dbReference type="GO" id="GO:0019509">
    <property type="term" value="P:L-methionine salvage from methylthioadenosine"/>
    <property type="evidence" value="ECO:0000318"/>
    <property type="project" value="GO_Central"/>
</dbReference>
<dbReference type="CDD" id="cd01629">
    <property type="entry name" value="HAD_EP"/>
    <property type="match status" value="1"/>
</dbReference>
<dbReference type="FunFam" id="1.10.720.60:FF:000001">
    <property type="entry name" value="Probable bifunctional methylthioribulose-1-phosphate dehydratase/enolase-phosphatase E1"/>
    <property type="match status" value="1"/>
</dbReference>
<dbReference type="FunFam" id="3.40.225.10:FF:000010">
    <property type="entry name" value="Probable bifunctional methylthioribulose-1-phosphate dehydratase/enolase-phosphatase E1"/>
    <property type="match status" value="1"/>
</dbReference>
<dbReference type="FunFam" id="3.40.50.1000:FF:000088">
    <property type="entry name" value="Probable bifunctional methylthioribulose-1-phosphate dehydratase/enolase-phosphatase E1"/>
    <property type="match status" value="1"/>
</dbReference>
<dbReference type="Gene3D" id="1.10.720.60">
    <property type="match status" value="1"/>
</dbReference>
<dbReference type="Gene3D" id="3.40.225.10">
    <property type="entry name" value="Class II aldolase/adducin N-terminal domain"/>
    <property type="match status" value="1"/>
</dbReference>
<dbReference type="Gene3D" id="3.40.50.1000">
    <property type="entry name" value="HAD superfamily/HAD-like"/>
    <property type="match status" value="1"/>
</dbReference>
<dbReference type="HAMAP" id="MF_03116">
    <property type="entry name" value="Salvage_MtnB_euk"/>
    <property type="match status" value="1"/>
</dbReference>
<dbReference type="HAMAP" id="MF_03118">
    <property type="entry name" value="Salvage_MtnBC"/>
    <property type="match status" value="1"/>
</dbReference>
<dbReference type="InterPro" id="IPR001303">
    <property type="entry name" value="Aldolase_II/adducin_N"/>
</dbReference>
<dbReference type="InterPro" id="IPR036409">
    <property type="entry name" value="Aldolase_II/adducin_N_sf"/>
</dbReference>
<dbReference type="InterPro" id="IPR023943">
    <property type="entry name" value="Enolase-ppase_E1"/>
</dbReference>
<dbReference type="InterPro" id="IPR036412">
    <property type="entry name" value="HAD-like_sf"/>
</dbReference>
<dbReference type="InterPro" id="IPR006439">
    <property type="entry name" value="HAD-SF_hydro_IA"/>
</dbReference>
<dbReference type="InterPro" id="IPR023214">
    <property type="entry name" value="HAD_sf"/>
</dbReference>
<dbReference type="InterPro" id="IPR017714">
    <property type="entry name" value="MethylthioRu-1-P_deHdtase_MtnB"/>
</dbReference>
<dbReference type="InterPro" id="IPR027505">
    <property type="entry name" value="MtnB_viridiplantae"/>
</dbReference>
<dbReference type="InterPro" id="IPR027514">
    <property type="entry name" value="Salvage_MtnB_euk"/>
</dbReference>
<dbReference type="NCBIfam" id="TIGR01691">
    <property type="entry name" value="enolase-ppase"/>
    <property type="match status" value="1"/>
</dbReference>
<dbReference type="NCBIfam" id="TIGR01549">
    <property type="entry name" value="HAD-SF-IA-v1"/>
    <property type="match status" value="1"/>
</dbReference>
<dbReference type="NCBIfam" id="TIGR03328">
    <property type="entry name" value="salvage_mtnB"/>
    <property type="match status" value="1"/>
</dbReference>
<dbReference type="PANTHER" id="PTHR20371">
    <property type="entry name" value="ENOLASE-PHOSPHATASE E1"/>
    <property type="match status" value="1"/>
</dbReference>
<dbReference type="PANTHER" id="PTHR20371:SF1">
    <property type="entry name" value="ENOLASE-PHOSPHATASE E1"/>
    <property type="match status" value="1"/>
</dbReference>
<dbReference type="Pfam" id="PF00596">
    <property type="entry name" value="Aldolase_II"/>
    <property type="match status" value="1"/>
</dbReference>
<dbReference type="Pfam" id="PF00702">
    <property type="entry name" value="Hydrolase"/>
    <property type="match status" value="1"/>
</dbReference>
<dbReference type="SFLD" id="SFLDG01133">
    <property type="entry name" value="C1.5.4:_Enolase-phosphatase_Li"/>
    <property type="match status" value="1"/>
</dbReference>
<dbReference type="SFLD" id="SFLDF00044">
    <property type="entry name" value="enolase-phosphatase"/>
    <property type="match status" value="1"/>
</dbReference>
<dbReference type="SMART" id="SM01007">
    <property type="entry name" value="Aldolase_II"/>
    <property type="match status" value="1"/>
</dbReference>
<dbReference type="SUPFAM" id="SSF53639">
    <property type="entry name" value="AraD/HMP-PK domain-like"/>
    <property type="match status" value="1"/>
</dbReference>
<dbReference type="SUPFAM" id="SSF56784">
    <property type="entry name" value="HAD-like"/>
    <property type="match status" value="1"/>
</dbReference>
<evidence type="ECO:0000255" key="1">
    <source>
        <dbReference type="HAMAP-Rule" id="MF_03118"/>
    </source>
</evidence>
<evidence type="ECO:0000305" key="2"/>
<accession>B4G0F3</accession>
<accession>B6T6D3</accession>
<protein>
    <recommendedName>
        <fullName evidence="1">Probable bifunctional methylthioribulose-1-phosphate dehydratase/enolase-phosphatase E1</fullName>
    </recommendedName>
    <domain>
        <recommendedName>
            <fullName evidence="1">Methylthioribulose-1-phosphate dehydratase</fullName>
            <shortName evidence="1">MTRu-1-P dehydratase</shortName>
            <ecNumber evidence="1">4.2.1.109</ecNumber>
        </recommendedName>
    </domain>
    <domain>
        <recommendedName>
            <fullName evidence="1">Enolase-phosphatase E1</fullName>
            <ecNumber evidence="1">3.1.3.77</ecNumber>
        </recommendedName>
        <alternativeName>
            <fullName evidence="1">2,3-diketo-5-methylthio-1-phosphopentane phosphatase</fullName>
        </alternativeName>
    </domain>
</protein>
<proteinExistence type="evidence at transcript level"/>
<keyword id="KW-0028">Amino-acid biosynthesis</keyword>
<keyword id="KW-0378">Hydrolase</keyword>
<keyword id="KW-0456">Lyase</keyword>
<keyword id="KW-0460">Magnesium</keyword>
<keyword id="KW-0479">Metal-binding</keyword>
<keyword id="KW-0486">Methionine biosynthesis</keyword>
<keyword id="KW-0511">Multifunctional enzyme</keyword>
<keyword id="KW-1185">Reference proteome</keyword>
<keyword id="KW-0862">Zinc</keyword>
<reference key="1">
    <citation type="journal article" date="2009" name="PLoS Genet.">
        <title>Sequencing, mapping, and analysis of 27,455 maize full-length cDNAs.</title>
        <authorList>
            <person name="Soderlund C."/>
            <person name="Descour A."/>
            <person name="Kudrna D."/>
            <person name="Bomhoff M."/>
            <person name="Boyd L."/>
            <person name="Currie J."/>
            <person name="Angelova A."/>
            <person name="Collura K."/>
            <person name="Wissotski M."/>
            <person name="Ashley E."/>
            <person name="Morrow D."/>
            <person name="Fernandes J."/>
            <person name="Walbot V."/>
            <person name="Yu Y."/>
        </authorList>
    </citation>
    <scope>NUCLEOTIDE SEQUENCE [LARGE SCALE MRNA]</scope>
    <source>
        <strain>B73</strain>
    </source>
</reference>
<reference key="2">
    <citation type="journal article" date="2009" name="Plant Mol. Biol.">
        <title>Insights into corn genes derived from large-scale cDNA sequencing.</title>
        <authorList>
            <person name="Alexandrov N.N."/>
            <person name="Brover V.V."/>
            <person name="Freidin S."/>
            <person name="Troukhan M.E."/>
            <person name="Tatarinova T.V."/>
            <person name="Zhang H."/>
            <person name="Swaller T.J."/>
            <person name="Lu Y.-P."/>
            <person name="Bouck J."/>
            <person name="Flavell R.B."/>
            <person name="Feldmann K.A."/>
        </authorList>
    </citation>
    <scope>NUCLEOTIDE SEQUENCE [LARGE SCALE MRNA]</scope>
</reference>